<gene>
    <name evidence="1" type="primary">ruvA</name>
    <name type="ordered locus">lin1568</name>
</gene>
<dbReference type="EMBL" id="AL596169">
    <property type="protein sequence ID" value="CAC96799.1"/>
    <property type="molecule type" value="Genomic_DNA"/>
</dbReference>
<dbReference type="PIR" id="AG1628">
    <property type="entry name" value="AG1628"/>
</dbReference>
<dbReference type="RefSeq" id="WP_003762402.1">
    <property type="nucleotide sequence ID" value="NC_003212.1"/>
</dbReference>
<dbReference type="SMR" id="Q92BI1"/>
<dbReference type="STRING" id="272626.gene:17565899"/>
<dbReference type="KEGG" id="lin:ruvA"/>
<dbReference type="eggNOG" id="COG0632">
    <property type="taxonomic scope" value="Bacteria"/>
</dbReference>
<dbReference type="HOGENOM" id="CLU_087936_1_0_9"/>
<dbReference type="OrthoDB" id="5293449at2"/>
<dbReference type="Proteomes" id="UP000002513">
    <property type="component" value="Chromosome"/>
</dbReference>
<dbReference type="GO" id="GO:0005737">
    <property type="term" value="C:cytoplasm"/>
    <property type="evidence" value="ECO:0007669"/>
    <property type="project" value="UniProtKB-SubCell"/>
</dbReference>
<dbReference type="GO" id="GO:0009379">
    <property type="term" value="C:Holliday junction helicase complex"/>
    <property type="evidence" value="ECO:0007669"/>
    <property type="project" value="InterPro"/>
</dbReference>
<dbReference type="GO" id="GO:0048476">
    <property type="term" value="C:Holliday junction resolvase complex"/>
    <property type="evidence" value="ECO:0007669"/>
    <property type="project" value="UniProtKB-UniRule"/>
</dbReference>
<dbReference type="GO" id="GO:0005524">
    <property type="term" value="F:ATP binding"/>
    <property type="evidence" value="ECO:0007669"/>
    <property type="project" value="InterPro"/>
</dbReference>
<dbReference type="GO" id="GO:0000400">
    <property type="term" value="F:four-way junction DNA binding"/>
    <property type="evidence" value="ECO:0007669"/>
    <property type="project" value="UniProtKB-UniRule"/>
</dbReference>
<dbReference type="GO" id="GO:0009378">
    <property type="term" value="F:four-way junction helicase activity"/>
    <property type="evidence" value="ECO:0007669"/>
    <property type="project" value="InterPro"/>
</dbReference>
<dbReference type="GO" id="GO:0006310">
    <property type="term" value="P:DNA recombination"/>
    <property type="evidence" value="ECO:0007669"/>
    <property type="project" value="UniProtKB-UniRule"/>
</dbReference>
<dbReference type="GO" id="GO:0006281">
    <property type="term" value="P:DNA repair"/>
    <property type="evidence" value="ECO:0007669"/>
    <property type="project" value="UniProtKB-UniRule"/>
</dbReference>
<dbReference type="CDD" id="cd14332">
    <property type="entry name" value="UBA_RuvA_C"/>
    <property type="match status" value="1"/>
</dbReference>
<dbReference type="Gene3D" id="1.10.150.20">
    <property type="entry name" value="5' to 3' exonuclease, C-terminal subdomain"/>
    <property type="match status" value="1"/>
</dbReference>
<dbReference type="Gene3D" id="1.10.8.10">
    <property type="entry name" value="DNA helicase RuvA subunit, C-terminal domain"/>
    <property type="match status" value="1"/>
</dbReference>
<dbReference type="Gene3D" id="2.40.50.140">
    <property type="entry name" value="Nucleic acid-binding proteins"/>
    <property type="match status" value="1"/>
</dbReference>
<dbReference type="HAMAP" id="MF_00031">
    <property type="entry name" value="DNA_HJ_migration_RuvA"/>
    <property type="match status" value="1"/>
</dbReference>
<dbReference type="InterPro" id="IPR013849">
    <property type="entry name" value="DNA_helicase_Holl-junc_RuvA_I"/>
</dbReference>
<dbReference type="InterPro" id="IPR003583">
    <property type="entry name" value="Hlx-hairpin-Hlx_DNA-bd_motif"/>
</dbReference>
<dbReference type="InterPro" id="IPR012340">
    <property type="entry name" value="NA-bd_OB-fold"/>
</dbReference>
<dbReference type="InterPro" id="IPR000085">
    <property type="entry name" value="RuvA"/>
</dbReference>
<dbReference type="InterPro" id="IPR010994">
    <property type="entry name" value="RuvA_2-like"/>
</dbReference>
<dbReference type="InterPro" id="IPR011114">
    <property type="entry name" value="RuvA_C"/>
</dbReference>
<dbReference type="InterPro" id="IPR036267">
    <property type="entry name" value="RuvA_C_sf"/>
</dbReference>
<dbReference type="NCBIfam" id="TIGR00084">
    <property type="entry name" value="ruvA"/>
    <property type="match status" value="1"/>
</dbReference>
<dbReference type="Pfam" id="PF14520">
    <property type="entry name" value="HHH_5"/>
    <property type="match status" value="1"/>
</dbReference>
<dbReference type="Pfam" id="PF07499">
    <property type="entry name" value="RuvA_C"/>
    <property type="match status" value="1"/>
</dbReference>
<dbReference type="Pfam" id="PF01330">
    <property type="entry name" value="RuvA_N"/>
    <property type="match status" value="1"/>
</dbReference>
<dbReference type="SMART" id="SM00278">
    <property type="entry name" value="HhH1"/>
    <property type="match status" value="2"/>
</dbReference>
<dbReference type="SUPFAM" id="SSF46929">
    <property type="entry name" value="DNA helicase RuvA subunit, C-terminal domain"/>
    <property type="match status" value="1"/>
</dbReference>
<dbReference type="SUPFAM" id="SSF50249">
    <property type="entry name" value="Nucleic acid-binding proteins"/>
    <property type="match status" value="1"/>
</dbReference>
<dbReference type="SUPFAM" id="SSF47781">
    <property type="entry name" value="RuvA domain 2-like"/>
    <property type="match status" value="1"/>
</dbReference>
<organism>
    <name type="scientific">Listeria innocua serovar 6a (strain ATCC BAA-680 / CLIP 11262)</name>
    <dbReference type="NCBI Taxonomy" id="272626"/>
    <lineage>
        <taxon>Bacteria</taxon>
        <taxon>Bacillati</taxon>
        <taxon>Bacillota</taxon>
        <taxon>Bacilli</taxon>
        <taxon>Bacillales</taxon>
        <taxon>Listeriaceae</taxon>
        <taxon>Listeria</taxon>
    </lineage>
</organism>
<protein>
    <recommendedName>
        <fullName evidence="1">Holliday junction branch migration complex subunit RuvA</fullName>
    </recommendedName>
</protein>
<evidence type="ECO:0000255" key="1">
    <source>
        <dbReference type="HAMAP-Rule" id="MF_00031"/>
    </source>
</evidence>
<sequence length="201" mass="22256">MYDYIKGIVKTITPEYIVVETGQIGYQIITGNPFSFQRLEGTEAQVFLYQHVREDNISLFGFQSTEERYLFKKLLSVSGIGPKSALAIIASGDVVPLITAIESEDDVYLTKFPSVGKKTARQIILDLKGKLADVVASEIVYKAAENDIVTGLSPQLEEAVLALEALGYSTRELKKVIPKMAKENDLTSDAYIKLALRLMTK</sequence>
<name>RUVA_LISIN</name>
<keyword id="KW-0963">Cytoplasm</keyword>
<keyword id="KW-0227">DNA damage</keyword>
<keyword id="KW-0233">DNA recombination</keyword>
<keyword id="KW-0234">DNA repair</keyword>
<keyword id="KW-0238">DNA-binding</keyword>
<feature type="chain" id="PRO_0000094644" description="Holliday junction branch migration complex subunit RuvA">
    <location>
        <begin position="1"/>
        <end position="201"/>
    </location>
</feature>
<feature type="region of interest" description="Domain I" evidence="1">
    <location>
        <begin position="1"/>
        <end position="63"/>
    </location>
</feature>
<feature type="region of interest" description="Domain II" evidence="1">
    <location>
        <begin position="64"/>
        <end position="142"/>
    </location>
</feature>
<feature type="region of interest" description="Flexible linker" evidence="1">
    <location>
        <begin position="143"/>
        <end position="153"/>
    </location>
</feature>
<feature type="region of interest" description="Domain III" evidence="1">
    <location>
        <begin position="153"/>
        <end position="201"/>
    </location>
</feature>
<proteinExistence type="inferred from homology"/>
<accession>Q92BI1</accession>
<reference key="1">
    <citation type="journal article" date="2001" name="Science">
        <title>Comparative genomics of Listeria species.</title>
        <authorList>
            <person name="Glaser P."/>
            <person name="Frangeul L."/>
            <person name="Buchrieser C."/>
            <person name="Rusniok C."/>
            <person name="Amend A."/>
            <person name="Baquero F."/>
            <person name="Berche P."/>
            <person name="Bloecker H."/>
            <person name="Brandt P."/>
            <person name="Chakraborty T."/>
            <person name="Charbit A."/>
            <person name="Chetouani F."/>
            <person name="Couve E."/>
            <person name="de Daruvar A."/>
            <person name="Dehoux P."/>
            <person name="Domann E."/>
            <person name="Dominguez-Bernal G."/>
            <person name="Duchaud E."/>
            <person name="Durant L."/>
            <person name="Dussurget O."/>
            <person name="Entian K.-D."/>
            <person name="Fsihi H."/>
            <person name="Garcia-del Portillo F."/>
            <person name="Garrido P."/>
            <person name="Gautier L."/>
            <person name="Goebel W."/>
            <person name="Gomez-Lopez N."/>
            <person name="Hain T."/>
            <person name="Hauf J."/>
            <person name="Jackson D."/>
            <person name="Jones L.-M."/>
            <person name="Kaerst U."/>
            <person name="Kreft J."/>
            <person name="Kuhn M."/>
            <person name="Kunst F."/>
            <person name="Kurapkat G."/>
            <person name="Madueno E."/>
            <person name="Maitournam A."/>
            <person name="Mata Vicente J."/>
            <person name="Ng E."/>
            <person name="Nedjari H."/>
            <person name="Nordsiek G."/>
            <person name="Novella S."/>
            <person name="de Pablos B."/>
            <person name="Perez-Diaz J.-C."/>
            <person name="Purcell R."/>
            <person name="Remmel B."/>
            <person name="Rose M."/>
            <person name="Schlueter T."/>
            <person name="Simoes N."/>
            <person name="Tierrez A."/>
            <person name="Vazquez-Boland J.-A."/>
            <person name="Voss H."/>
            <person name="Wehland J."/>
            <person name="Cossart P."/>
        </authorList>
    </citation>
    <scope>NUCLEOTIDE SEQUENCE [LARGE SCALE GENOMIC DNA]</scope>
    <source>
        <strain>ATCC BAA-680 / CLIP 11262</strain>
    </source>
</reference>
<comment type="function">
    <text evidence="1">The RuvA-RuvB-RuvC complex processes Holliday junction (HJ) DNA during genetic recombination and DNA repair, while the RuvA-RuvB complex plays an important role in the rescue of blocked DNA replication forks via replication fork reversal (RFR). RuvA specifically binds to HJ cruciform DNA, conferring on it an open structure. The RuvB hexamer acts as an ATP-dependent pump, pulling dsDNA into and through the RuvAB complex. HJ branch migration allows RuvC to scan DNA until it finds its consensus sequence, where it cleaves and resolves the cruciform DNA.</text>
</comment>
<comment type="subunit">
    <text evidence="1">Homotetramer. Forms an RuvA(8)-RuvB(12)-Holliday junction (HJ) complex. HJ DNA is sandwiched between 2 RuvA tetramers; dsDNA enters through RuvA and exits via RuvB. An RuvB hexamer assembles on each DNA strand where it exits the tetramer. Each RuvB hexamer is contacted by two RuvA subunits (via domain III) on 2 adjacent RuvB subunits; this complex drives branch migration. In the full resolvosome a probable DNA-RuvA(4)-RuvB(12)-RuvC(2) complex forms which resolves the HJ.</text>
</comment>
<comment type="subcellular location">
    <subcellularLocation>
        <location evidence="1">Cytoplasm</location>
    </subcellularLocation>
</comment>
<comment type="domain">
    <text evidence="1">Has three domains with a flexible linker between the domains II and III and assumes an 'L' shape. Domain III is highly mobile and contacts RuvB.</text>
</comment>
<comment type="similarity">
    <text evidence="1">Belongs to the RuvA family.</text>
</comment>